<feature type="chain" id="PRO_0000300923" description="Glutamate-1-semialdehyde 2,1-aminomutase">
    <location>
        <begin position="1"/>
        <end position="428"/>
    </location>
</feature>
<feature type="modified residue" description="N6-(pyridoxal phosphate)lysine" evidence="1">
    <location>
        <position position="265"/>
    </location>
</feature>
<gene>
    <name evidence="1" type="primary">hemL</name>
    <name type="ordered locus">Mfla_2664</name>
</gene>
<dbReference type="EC" id="5.4.3.8" evidence="1"/>
<dbReference type="EMBL" id="CP000284">
    <property type="protein sequence ID" value="ABE50927.1"/>
    <property type="molecule type" value="Genomic_DNA"/>
</dbReference>
<dbReference type="RefSeq" id="WP_011480880.1">
    <property type="nucleotide sequence ID" value="NC_007947.1"/>
</dbReference>
<dbReference type="SMR" id="Q1GXW0"/>
<dbReference type="STRING" id="265072.Mfla_2664"/>
<dbReference type="KEGG" id="mfa:Mfla_2664"/>
<dbReference type="eggNOG" id="COG0001">
    <property type="taxonomic scope" value="Bacteria"/>
</dbReference>
<dbReference type="HOGENOM" id="CLU_016922_1_5_4"/>
<dbReference type="OrthoDB" id="3398487at2"/>
<dbReference type="UniPathway" id="UPA00251">
    <property type="reaction ID" value="UER00317"/>
</dbReference>
<dbReference type="Proteomes" id="UP000002440">
    <property type="component" value="Chromosome"/>
</dbReference>
<dbReference type="GO" id="GO:0005737">
    <property type="term" value="C:cytoplasm"/>
    <property type="evidence" value="ECO:0007669"/>
    <property type="project" value="UniProtKB-SubCell"/>
</dbReference>
<dbReference type="GO" id="GO:0042286">
    <property type="term" value="F:glutamate-1-semialdehyde 2,1-aminomutase activity"/>
    <property type="evidence" value="ECO:0007669"/>
    <property type="project" value="UniProtKB-UniRule"/>
</dbReference>
<dbReference type="GO" id="GO:0030170">
    <property type="term" value="F:pyridoxal phosphate binding"/>
    <property type="evidence" value="ECO:0007669"/>
    <property type="project" value="InterPro"/>
</dbReference>
<dbReference type="GO" id="GO:0008483">
    <property type="term" value="F:transaminase activity"/>
    <property type="evidence" value="ECO:0007669"/>
    <property type="project" value="InterPro"/>
</dbReference>
<dbReference type="GO" id="GO:0006782">
    <property type="term" value="P:protoporphyrinogen IX biosynthetic process"/>
    <property type="evidence" value="ECO:0007669"/>
    <property type="project" value="UniProtKB-UniRule"/>
</dbReference>
<dbReference type="CDD" id="cd00610">
    <property type="entry name" value="OAT_like"/>
    <property type="match status" value="1"/>
</dbReference>
<dbReference type="FunFam" id="3.40.640.10:FF:000021">
    <property type="entry name" value="Glutamate-1-semialdehyde 2,1-aminomutase"/>
    <property type="match status" value="1"/>
</dbReference>
<dbReference type="Gene3D" id="3.90.1150.10">
    <property type="entry name" value="Aspartate Aminotransferase, domain 1"/>
    <property type="match status" value="1"/>
</dbReference>
<dbReference type="Gene3D" id="3.40.640.10">
    <property type="entry name" value="Type I PLP-dependent aspartate aminotransferase-like (Major domain)"/>
    <property type="match status" value="1"/>
</dbReference>
<dbReference type="HAMAP" id="MF_00375">
    <property type="entry name" value="HemL_aminotrans_3"/>
    <property type="match status" value="1"/>
</dbReference>
<dbReference type="InterPro" id="IPR004639">
    <property type="entry name" value="4pyrrol_synth_GluAld_NH2Trfase"/>
</dbReference>
<dbReference type="InterPro" id="IPR005814">
    <property type="entry name" value="Aminotrans_3"/>
</dbReference>
<dbReference type="InterPro" id="IPR049704">
    <property type="entry name" value="Aminotrans_3_PPA_site"/>
</dbReference>
<dbReference type="InterPro" id="IPR015424">
    <property type="entry name" value="PyrdxlP-dep_Trfase"/>
</dbReference>
<dbReference type="InterPro" id="IPR015421">
    <property type="entry name" value="PyrdxlP-dep_Trfase_major"/>
</dbReference>
<dbReference type="InterPro" id="IPR015422">
    <property type="entry name" value="PyrdxlP-dep_Trfase_small"/>
</dbReference>
<dbReference type="NCBIfam" id="TIGR00713">
    <property type="entry name" value="hemL"/>
    <property type="match status" value="1"/>
</dbReference>
<dbReference type="NCBIfam" id="NF000818">
    <property type="entry name" value="PRK00062.1"/>
    <property type="match status" value="1"/>
</dbReference>
<dbReference type="PANTHER" id="PTHR43713">
    <property type="entry name" value="GLUTAMATE-1-SEMIALDEHYDE 2,1-AMINOMUTASE"/>
    <property type="match status" value="1"/>
</dbReference>
<dbReference type="PANTHER" id="PTHR43713:SF3">
    <property type="entry name" value="GLUTAMATE-1-SEMIALDEHYDE 2,1-AMINOMUTASE 1, CHLOROPLASTIC-RELATED"/>
    <property type="match status" value="1"/>
</dbReference>
<dbReference type="Pfam" id="PF00202">
    <property type="entry name" value="Aminotran_3"/>
    <property type="match status" value="1"/>
</dbReference>
<dbReference type="SUPFAM" id="SSF53383">
    <property type="entry name" value="PLP-dependent transferases"/>
    <property type="match status" value="1"/>
</dbReference>
<dbReference type="PROSITE" id="PS00600">
    <property type="entry name" value="AA_TRANSFER_CLASS_3"/>
    <property type="match status" value="1"/>
</dbReference>
<name>GSA_METFK</name>
<keyword id="KW-0963">Cytoplasm</keyword>
<keyword id="KW-0413">Isomerase</keyword>
<keyword id="KW-0627">Porphyrin biosynthesis</keyword>
<keyword id="KW-0663">Pyridoxal phosphate</keyword>
<keyword id="KW-1185">Reference proteome</keyword>
<accession>Q1GXW0</accession>
<comment type="catalytic activity">
    <reaction evidence="1">
        <text>(S)-4-amino-5-oxopentanoate = 5-aminolevulinate</text>
        <dbReference type="Rhea" id="RHEA:14265"/>
        <dbReference type="ChEBI" id="CHEBI:57501"/>
        <dbReference type="ChEBI" id="CHEBI:356416"/>
        <dbReference type="EC" id="5.4.3.8"/>
    </reaction>
</comment>
<comment type="cofactor">
    <cofactor evidence="1">
        <name>pyridoxal 5'-phosphate</name>
        <dbReference type="ChEBI" id="CHEBI:597326"/>
    </cofactor>
</comment>
<comment type="pathway">
    <text evidence="1">Porphyrin-containing compound metabolism; protoporphyrin-IX biosynthesis; 5-aminolevulinate from L-glutamyl-tRNA(Glu): step 2/2.</text>
</comment>
<comment type="subunit">
    <text evidence="1">Homodimer.</text>
</comment>
<comment type="subcellular location">
    <subcellularLocation>
        <location evidence="1">Cytoplasm</location>
    </subcellularLocation>
</comment>
<comment type="similarity">
    <text evidence="1">Belongs to the class-III pyridoxal-phosphate-dependent aminotransferase family. HemL subfamily.</text>
</comment>
<proteinExistence type="inferred from homology"/>
<organism>
    <name type="scientific">Methylobacillus flagellatus (strain ATCC 51484 / DSM 6875 / VKM B-1610 / KT)</name>
    <dbReference type="NCBI Taxonomy" id="265072"/>
    <lineage>
        <taxon>Bacteria</taxon>
        <taxon>Pseudomonadati</taxon>
        <taxon>Pseudomonadota</taxon>
        <taxon>Betaproteobacteria</taxon>
        <taxon>Nitrosomonadales</taxon>
        <taxon>Methylophilaceae</taxon>
        <taxon>Methylobacillus</taxon>
    </lineage>
</organism>
<evidence type="ECO:0000255" key="1">
    <source>
        <dbReference type="HAMAP-Rule" id="MF_00375"/>
    </source>
</evidence>
<reference key="1">
    <citation type="submission" date="2006-03" db="EMBL/GenBank/DDBJ databases">
        <title>Complete sequence of Methylobacillus flagellatus KT.</title>
        <authorList>
            <consortium name="US DOE Joint Genome Institute"/>
            <person name="Copeland A."/>
            <person name="Lucas S."/>
            <person name="Lapidus A."/>
            <person name="Barry K."/>
            <person name="Detter J.C."/>
            <person name="Glavina del Rio T."/>
            <person name="Hammon N."/>
            <person name="Israni S."/>
            <person name="Dalin E."/>
            <person name="Tice H."/>
            <person name="Pitluck S."/>
            <person name="Brettin T."/>
            <person name="Bruce D."/>
            <person name="Han C."/>
            <person name="Tapia R."/>
            <person name="Saunders E."/>
            <person name="Gilna P."/>
            <person name="Schmutz J."/>
            <person name="Larimer F."/>
            <person name="Land M."/>
            <person name="Kyrpides N."/>
            <person name="Anderson I."/>
            <person name="Richardson P."/>
        </authorList>
    </citation>
    <scope>NUCLEOTIDE SEQUENCE [LARGE SCALE GENOMIC DNA]</scope>
    <source>
        <strain>ATCC 51484 / DSM 6875 / VKM B-1610 / KT</strain>
    </source>
</reference>
<protein>
    <recommendedName>
        <fullName evidence="1">Glutamate-1-semialdehyde 2,1-aminomutase</fullName>
        <shortName evidence="1">GSA</shortName>
        <ecNumber evidence="1">5.4.3.8</ecNumber>
    </recommendedName>
    <alternativeName>
        <fullName evidence="1">Glutamate-1-semialdehyde aminotransferase</fullName>
        <shortName evidence="1">GSA-AT</shortName>
    </alternativeName>
</protein>
<sequence>MSRNQQLFEQSQTLIPGGVNSPVRAFGSVGGTPVFFKRGLGARLWDEDGKEYIDYVGSWGPMILGHAQPDVIAAVQATAANSLSFGAPTALELEMAQLITQLVPSMEQVRLVSSGTEATMSAIRLARGFTSRSKILKFEGCYHGHADSLLVKAGSGALTFGQPSSAGVPPELAAHTLTLPYNDVQALEHLFEELGKEIACVILEPVAGNMNLVRPTPEFLGALRSLCTHSGTLLIFDEVMTGFRVALGGAQQLFGIKPDLTTLGKVIGGGLPVGAFGGRADVMAFLAPLGPVYQAGTLSGNPVAVAAGLATLKQLQRPGFHEELALKTRQLTDGLARAARDAGVTFSAQSVGGMFGLYFSAECPASFAEVMQSDKQAFNRFFHGMLEAGVYLAPSAFEAGFVSIAHSEADISQTIVSAQGVFSRINDQ</sequence>